<organism>
    <name type="scientific">Bartonella henselae (strain ATCC 49882 / DSM 28221 / CCUG 30454 / Houston 1)</name>
    <name type="common">Rochalimaea henselae</name>
    <dbReference type="NCBI Taxonomy" id="283166"/>
    <lineage>
        <taxon>Bacteria</taxon>
        <taxon>Pseudomonadati</taxon>
        <taxon>Pseudomonadota</taxon>
        <taxon>Alphaproteobacteria</taxon>
        <taxon>Hyphomicrobiales</taxon>
        <taxon>Bartonellaceae</taxon>
        <taxon>Bartonella</taxon>
    </lineage>
</organism>
<proteinExistence type="inferred from homology"/>
<name>GRPE_BARHE</name>
<evidence type="ECO:0000255" key="1">
    <source>
        <dbReference type="HAMAP-Rule" id="MF_01151"/>
    </source>
</evidence>
<evidence type="ECO:0000256" key="2">
    <source>
        <dbReference type="SAM" id="MobiDB-lite"/>
    </source>
</evidence>
<comment type="function">
    <text evidence="1">Participates actively in the response to hyperosmotic and heat shock by preventing the aggregation of stress-denatured proteins, in association with DnaK and GrpE. It is the nucleotide exchange factor for DnaK and may function as a thermosensor. Unfolded proteins bind initially to DnaJ; upon interaction with the DnaJ-bound protein, DnaK hydrolyzes its bound ATP, resulting in the formation of a stable complex. GrpE releases ADP from DnaK; ATP binding to DnaK triggers the release of the substrate protein, thus completing the reaction cycle. Several rounds of ATP-dependent interactions between DnaJ, DnaK and GrpE are required for fully efficient folding.</text>
</comment>
<comment type="subunit">
    <text evidence="1">Homodimer.</text>
</comment>
<comment type="subcellular location">
    <subcellularLocation>
        <location evidence="1">Cytoplasm</location>
    </subcellularLocation>
</comment>
<comment type="similarity">
    <text evidence="1">Belongs to the GrpE family.</text>
</comment>
<reference key="1">
    <citation type="journal article" date="2004" name="Proc. Natl. Acad. Sci. U.S.A.">
        <title>The louse-borne human pathogen Bartonella quintana is a genomic derivative of the zoonotic agent Bartonella henselae.</title>
        <authorList>
            <person name="Alsmark U.C.M."/>
            <person name="Frank A.C."/>
            <person name="Karlberg E.O."/>
            <person name="Legault B.-A."/>
            <person name="Ardell D.H."/>
            <person name="Canbaeck B."/>
            <person name="Eriksson A.-S."/>
            <person name="Naeslund A.K."/>
            <person name="Handley S.A."/>
            <person name="Huvet M."/>
            <person name="La Scola B."/>
            <person name="Holmberg M."/>
            <person name="Andersson S.G.E."/>
        </authorList>
    </citation>
    <scope>NUCLEOTIDE SEQUENCE [LARGE SCALE GENOMIC DNA]</scope>
    <source>
        <strain>ATCC 49882 / DSM 28221 / CCUG 30454 / Houston 1</strain>
    </source>
</reference>
<keyword id="KW-0143">Chaperone</keyword>
<keyword id="KW-0963">Cytoplasm</keyword>
<keyword id="KW-0346">Stress response</keyword>
<feature type="chain" id="PRO_0000113745" description="Protein GrpE">
    <location>
        <begin position="1"/>
        <end position="220"/>
    </location>
</feature>
<feature type="region of interest" description="Disordered" evidence="2">
    <location>
        <begin position="1"/>
        <end position="22"/>
    </location>
</feature>
<sequence length="220" mass="23925">MSDEKNKFTDASFENCDLKNPSDRDALKQAADKFLKAHAAEADADVKGGGEALVDPLAALQDENKELKDQLLRLAADMENLRRRTARDVADAKAYSIANFARDMLSVSDNLNRALDAIPEGAKENDAGLKTLAEGVEMTERAMIAALERHGVQKIHPEGQKFDPHFHQAMFEIPNSDVPDNTVQQVVQAGYIIGERVLRPAIVGVAKGGAKDISVESDSD</sequence>
<dbReference type="EMBL" id="BX897699">
    <property type="protein sequence ID" value="CAF26872.1"/>
    <property type="molecule type" value="Genomic_DNA"/>
</dbReference>
<dbReference type="RefSeq" id="WP_011180019.1">
    <property type="nucleotide sequence ID" value="NZ_LRIJ02000001.1"/>
</dbReference>
<dbReference type="SMR" id="Q6G563"/>
<dbReference type="PaxDb" id="283166-BH00560"/>
<dbReference type="EnsemblBacteria" id="CAF26872">
    <property type="protein sequence ID" value="CAF26872"/>
    <property type="gene ID" value="BH00560"/>
</dbReference>
<dbReference type="GeneID" id="92986343"/>
<dbReference type="KEGG" id="bhe:BH00560"/>
<dbReference type="eggNOG" id="COG0576">
    <property type="taxonomic scope" value="Bacteria"/>
</dbReference>
<dbReference type="OrthoDB" id="9789811at2"/>
<dbReference type="Proteomes" id="UP000000421">
    <property type="component" value="Chromosome"/>
</dbReference>
<dbReference type="GO" id="GO:0005737">
    <property type="term" value="C:cytoplasm"/>
    <property type="evidence" value="ECO:0007669"/>
    <property type="project" value="UniProtKB-SubCell"/>
</dbReference>
<dbReference type="GO" id="GO:0000774">
    <property type="term" value="F:adenyl-nucleotide exchange factor activity"/>
    <property type="evidence" value="ECO:0007669"/>
    <property type="project" value="InterPro"/>
</dbReference>
<dbReference type="GO" id="GO:0042803">
    <property type="term" value="F:protein homodimerization activity"/>
    <property type="evidence" value="ECO:0007669"/>
    <property type="project" value="InterPro"/>
</dbReference>
<dbReference type="GO" id="GO:0051087">
    <property type="term" value="F:protein-folding chaperone binding"/>
    <property type="evidence" value="ECO:0007669"/>
    <property type="project" value="InterPro"/>
</dbReference>
<dbReference type="GO" id="GO:0051082">
    <property type="term" value="F:unfolded protein binding"/>
    <property type="evidence" value="ECO:0007669"/>
    <property type="project" value="TreeGrafter"/>
</dbReference>
<dbReference type="GO" id="GO:0006457">
    <property type="term" value="P:protein folding"/>
    <property type="evidence" value="ECO:0007669"/>
    <property type="project" value="InterPro"/>
</dbReference>
<dbReference type="CDD" id="cd00446">
    <property type="entry name" value="GrpE"/>
    <property type="match status" value="1"/>
</dbReference>
<dbReference type="FunFam" id="2.30.22.10:FF:000001">
    <property type="entry name" value="Protein GrpE"/>
    <property type="match status" value="1"/>
</dbReference>
<dbReference type="Gene3D" id="3.90.20.20">
    <property type="match status" value="1"/>
</dbReference>
<dbReference type="Gene3D" id="2.30.22.10">
    <property type="entry name" value="Head domain of nucleotide exchange factor GrpE"/>
    <property type="match status" value="1"/>
</dbReference>
<dbReference type="HAMAP" id="MF_01151">
    <property type="entry name" value="GrpE"/>
    <property type="match status" value="1"/>
</dbReference>
<dbReference type="InterPro" id="IPR000740">
    <property type="entry name" value="GrpE"/>
</dbReference>
<dbReference type="InterPro" id="IPR013805">
    <property type="entry name" value="GrpE_coiled_coil"/>
</dbReference>
<dbReference type="InterPro" id="IPR009012">
    <property type="entry name" value="GrpE_head"/>
</dbReference>
<dbReference type="NCBIfam" id="NF010738">
    <property type="entry name" value="PRK14140.1"/>
    <property type="match status" value="1"/>
</dbReference>
<dbReference type="NCBIfam" id="NF010739">
    <property type="entry name" value="PRK14141.1"/>
    <property type="match status" value="1"/>
</dbReference>
<dbReference type="NCBIfam" id="NF010748">
    <property type="entry name" value="PRK14150.1"/>
    <property type="match status" value="1"/>
</dbReference>
<dbReference type="PANTHER" id="PTHR21237">
    <property type="entry name" value="GRPE PROTEIN"/>
    <property type="match status" value="1"/>
</dbReference>
<dbReference type="PANTHER" id="PTHR21237:SF23">
    <property type="entry name" value="GRPE PROTEIN HOMOLOG, MITOCHONDRIAL"/>
    <property type="match status" value="1"/>
</dbReference>
<dbReference type="Pfam" id="PF01025">
    <property type="entry name" value="GrpE"/>
    <property type="match status" value="1"/>
</dbReference>
<dbReference type="PRINTS" id="PR00773">
    <property type="entry name" value="GRPEPROTEIN"/>
</dbReference>
<dbReference type="SUPFAM" id="SSF58014">
    <property type="entry name" value="Coiled-coil domain of nucleotide exchange factor GrpE"/>
    <property type="match status" value="1"/>
</dbReference>
<dbReference type="SUPFAM" id="SSF51064">
    <property type="entry name" value="Head domain of nucleotide exchange factor GrpE"/>
    <property type="match status" value="1"/>
</dbReference>
<dbReference type="PROSITE" id="PS01071">
    <property type="entry name" value="GRPE"/>
    <property type="match status" value="1"/>
</dbReference>
<accession>Q6G563</accession>
<gene>
    <name evidence="1" type="primary">grpE</name>
    <name type="ordered locus">BH00560</name>
</gene>
<protein>
    <recommendedName>
        <fullName evidence="1">Protein GrpE</fullName>
    </recommendedName>
    <alternativeName>
        <fullName evidence="1">HSP-70 cofactor</fullName>
    </alternativeName>
</protein>